<accession>W6QM20</accession>
<comment type="function">
    <text evidence="1">BrlA, abaA and wetA are pivotal regulators of conidiophore development and conidium maturation (By similarity). They act individually and together to regulate their own expression and that of numerous other sporulation-specific genes (By similarity).</text>
</comment>
<comment type="induction">
    <text evidence="3">Expression is positively regulated by pcz1 (PubMed:25811807).</text>
</comment>
<comment type="similarity">
    <text evidence="5">Belongs to the wetA family.</text>
</comment>
<organism>
    <name type="scientific">Penicillium roqueforti (strain FM164)</name>
    <dbReference type="NCBI Taxonomy" id="1365484"/>
    <lineage>
        <taxon>Eukaryota</taxon>
        <taxon>Fungi</taxon>
        <taxon>Dikarya</taxon>
        <taxon>Ascomycota</taxon>
        <taxon>Pezizomycotina</taxon>
        <taxon>Eurotiomycetes</taxon>
        <taxon>Eurotiomycetidae</taxon>
        <taxon>Eurotiales</taxon>
        <taxon>Aspergillaceae</taxon>
        <taxon>Penicillium</taxon>
    </lineage>
</organism>
<gene>
    <name evidence="4" type="primary">wetA</name>
    <name type="ORF">PROQFM164_S05g000864</name>
</gene>
<sequence length="520" mass="57306">MFAQQYDHSFNDLFNQYVNMETSAADGKDSALSEFDQLFPLDSLSNDCGDLAPTVSTPKCHQSPQPWSNEWSLQYDGPAADHFAFHDTVHPSAISDVNLNHFEVPSRPTATHALSISPSTPPATPRRKPTQSALITPKTIRHRSPNERRSHLRKQSFSPSLMRSSNLSKSRMAYPEAWAQRLQNFSLHNSEDRLPLSPPPSDALIQHENMPTEQIMNQSRDSAEMPPQYDARLYHQSPSVPMQSPSIAMSARQQQHYIAHPSSSALTNSSPSSADDIFSLSHSSDLHSLSSWQSDSLHASSLPFTPDLQGQESQWWSPMPSRVAQQQAAYLASPTPVRHMQNVGSQNDIMQGGLMIQFNPSYDMSADHSFSSNMLPTSSQKFDTSYTSSQVHDISRSSSSLSPKTGTSPRDTHHGSISKPTHRRTHSRKLSSQSMNTPKPAKAPSSSSRGSNKSVSVSFVNFTADDSKKILTGVAPSGSSKTKARREQEARDRRRKLSEAALRAVRSAGGDVEALEAVLC</sequence>
<protein>
    <recommendedName>
        <fullName evidence="5">Developmental regulatory protein wetA</fullName>
    </recommendedName>
</protein>
<evidence type="ECO:0000250" key="1">
    <source>
        <dbReference type="UniProtKB" id="P22022"/>
    </source>
</evidence>
<evidence type="ECO:0000256" key="2">
    <source>
        <dbReference type="SAM" id="MobiDB-lite"/>
    </source>
</evidence>
<evidence type="ECO:0000269" key="3">
    <source>
    </source>
</evidence>
<evidence type="ECO:0000303" key="4">
    <source>
    </source>
</evidence>
<evidence type="ECO:0000305" key="5"/>
<proteinExistence type="evidence at transcript level"/>
<dbReference type="EMBL" id="HG792019">
    <property type="protein sequence ID" value="CDM37031.1"/>
    <property type="molecule type" value="Genomic_DNA"/>
</dbReference>
<dbReference type="STRING" id="1365484.W6QM20"/>
<dbReference type="OMA" id="MFAQPFD"/>
<dbReference type="OrthoDB" id="2575228at2759"/>
<dbReference type="Proteomes" id="UP000030686">
    <property type="component" value="Unassembled WGS sequence"/>
</dbReference>
<dbReference type="GO" id="GO:0048315">
    <property type="term" value="P:conidium formation"/>
    <property type="evidence" value="ECO:0007669"/>
    <property type="project" value="UniProtKB-KW"/>
</dbReference>
<dbReference type="GO" id="GO:0030435">
    <property type="term" value="P:sporulation resulting in formation of a cellular spore"/>
    <property type="evidence" value="ECO:0007669"/>
    <property type="project" value="UniProtKB-KW"/>
</dbReference>
<dbReference type="InterPro" id="IPR040112">
    <property type="entry name" value="WetA"/>
</dbReference>
<dbReference type="PANTHER" id="PTHR22934:SF25">
    <property type="entry name" value="DEVELOPMENTAL REGULATORY PROTEIN WETA"/>
    <property type="match status" value="1"/>
</dbReference>
<dbReference type="PANTHER" id="PTHR22934">
    <property type="entry name" value="PROTEIN ESC1/WETA-RELATED"/>
    <property type="match status" value="1"/>
</dbReference>
<reference key="1">
    <citation type="journal article" date="2014" name="Nat. Commun.">
        <title>Multiple recent horizontal transfers of a large genomic region in cheese making fungi.</title>
        <authorList>
            <person name="Cheeseman K."/>
            <person name="Ropars J."/>
            <person name="Renault P."/>
            <person name="Dupont J."/>
            <person name="Gouzy J."/>
            <person name="Branca A."/>
            <person name="Abraham A.-L."/>
            <person name="Ceppi M."/>
            <person name="Conseiller E."/>
            <person name="Debuchy R."/>
            <person name="Malagnac F."/>
            <person name="Goarin A."/>
            <person name="Silar P."/>
            <person name="Lacoste S."/>
            <person name="Sallet E."/>
            <person name="Bensimon A."/>
            <person name="Giraud T."/>
            <person name="Brygoo Y."/>
        </authorList>
    </citation>
    <scope>NUCLEOTIDE SEQUENCE [LARGE SCALE GENOMIC DNA]</scope>
    <source>
        <strain>FM164</strain>
    </source>
</reference>
<reference key="2">
    <citation type="journal article" date="2015" name="PLoS ONE">
        <title>The pcz1 gene, which encodes a Zn(II)2Cys6 protein, is involved in the control of growth, conidiation, and conidial germination in the filamentous fungus Penicillium roqueforti.</title>
        <authorList>
            <person name="Gil-Duran C."/>
            <person name="Rojas-Aedo J.F."/>
            <person name="Medina E."/>
            <person name="Vaca I."/>
            <person name="Garcia-Rico R.O."/>
            <person name="Villagran S."/>
            <person name="Levican G."/>
            <person name="Chavez R."/>
        </authorList>
    </citation>
    <scope>INDUCTION</scope>
</reference>
<keyword id="KW-0010">Activator</keyword>
<keyword id="KW-0183">Conidiation</keyword>
<keyword id="KW-1185">Reference proteome</keyword>
<keyword id="KW-0749">Sporulation</keyword>
<keyword id="KW-0804">Transcription</keyword>
<keyword id="KW-0805">Transcription regulation</keyword>
<feature type="chain" id="PRO_0000435930" description="Developmental regulatory protein wetA">
    <location>
        <begin position="1"/>
        <end position="520"/>
    </location>
</feature>
<feature type="region of interest" description="Disordered" evidence="2">
    <location>
        <begin position="109"/>
        <end position="165"/>
    </location>
</feature>
<feature type="region of interest" description="Disordered" evidence="2">
    <location>
        <begin position="378"/>
        <end position="454"/>
    </location>
</feature>
<feature type="region of interest" description="Disordered" evidence="2">
    <location>
        <begin position="468"/>
        <end position="496"/>
    </location>
</feature>
<feature type="compositionally biased region" description="Polar residues" evidence="2">
    <location>
        <begin position="109"/>
        <end position="118"/>
    </location>
</feature>
<feature type="compositionally biased region" description="Polar residues" evidence="2">
    <location>
        <begin position="155"/>
        <end position="165"/>
    </location>
</feature>
<feature type="compositionally biased region" description="Polar residues" evidence="2">
    <location>
        <begin position="378"/>
        <end position="392"/>
    </location>
</feature>
<feature type="compositionally biased region" description="Basic residues" evidence="2">
    <location>
        <begin position="420"/>
        <end position="429"/>
    </location>
</feature>
<feature type="compositionally biased region" description="Low complexity" evidence="2">
    <location>
        <begin position="445"/>
        <end position="454"/>
    </location>
</feature>
<name>WETA_PENRF</name>